<evidence type="ECO:0000250" key="1"/>
<evidence type="ECO:0000250" key="2">
    <source>
        <dbReference type="UniProtKB" id="P86924"/>
    </source>
</evidence>
<evidence type="ECO:0000250" key="3">
    <source>
        <dbReference type="UniProtKB" id="P86927"/>
    </source>
</evidence>
<evidence type="ECO:0000305" key="4"/>
<evidence type="ECO:0000312" key="5">
    <source>
        <dbReference type="Proteomes" id="UP000008524"/>
    </source>
</evidence>
<organism>
    <name type="scientific">Trypanosoma brucei brucei (strain 927/4 GUTat10.1)</name>
    <dbReference type="NCBI Taxonomy" id="185431"/>
    <lineage>
        <taxon>Eukaryota</taxon>
        <taxon>Discoba</taxon>
        <taxon>Euglenozoa</taxon>
        <taxon>Kinetoplastea</taxon>
        <taxon>Metakinetoplastina</taxon>
        <taxon>Trypanosomatida</taxon>
        <taxon>Trypanosomatidae</taxon>
        <taxon>Trypanosoma</taxon>
    </lineage>
</organism>
<feature type="transit peptide" description="Mitochondrion">
    <location>
        <begin position="1"/>
        <end position="17"/>
    </location>
</feature>
<feature type="chain" id="PRO_0000022473" description="RNA-editing ligase 2, mitochondrial">
    <location>
        <begin position="18"/>
        <end position="416"/>
    </location>
</feature>
<feature type="active site" description="N6-AMP-lysine intermediate" evidence="1">
    <location>
        <position position="57"/>
    </location>
</feature>
<feature type="binding site" evidence="1">
    <location>
        <begin position="29"/>
        <end position="31"/>
    </location>
    <ligand>
        <name>ATP</name>
        <dbReference type="ChEBI" id="CHEBI:30616"/>
    </ligand>
</feature>
<feature type="binding site" evidence="1">
    <location>
        <begin position="56"/>
        <end position="62"/>
    </location>
    <ligand>
        <name>ATP</name>
        <dbReference type="ChEBI" id="CHEBI:30616"/>
    </ligand>
</feature>
<feature type="binding site" evidence="1">
    <location>
        <position position="79"/>
    </location>
    <ligand>
        <name>ATP</name>
        <dbReference type="ChEBI" id="CHEBI:30616"/>
    </ligand>
</feature>
<feature type="binding site" evidence="1">
    <location>
        <position position="126"/>
    </location>
    <ligand>
        <name>ATP</name>
        <dbReference type="ChEBI" id="CHEBI:30616"/>
    </ligand>
</feature>
<feature type="binding site" evidence="1">
    <location>
        <position position="173"/>
    </location>
    <ligand>
        <name>ATP</name>
        <dbReference type="ChEBI" id="CHEBI:30616"/>
    </ligand>
</feature>
<feature type="binding site" evidence="1">
    <location>
        <begin position="269"/>
        <end position="271"/>
    </location>
    <ligand>
        <name>ATP</name>
        <dbReference type="ChEBI" id="CHEBI:30616"/>
    </ligand>
</feature>
<dbReference type="EC" id="6.5.1.3" evidence="3"/>
<dbReference type="EMBL" id="AL929603">
    <property type="protein sequence ID" value="CAJ16514.1"/>
    <property type="molecule type" value="Genomic_DNA"/>
</dbReference>
<dbReference type="SMR" id="P86925"/>
<dbReference type="STRING" id="185431.P86925"/>
<dbReference type="PaxDb" id="5691-CAJ16514"/>
<dbReference type="GeneID" id="4357372"/>
<dbReference type="KEGG" id="tbr:TB927.1.3030"/>
<dbReference type="VEuPathDB" id="TriTrypDB:Tb927.1.3030"/>
<dbReference type="eggNOG" id="ENOG502RW2V">
    <property type="taxonomic scope" value="Eukaryota"/>
</dbReference>
<dbReference type="InParanoid" id="P86925"/>
<dbReference type="OMA" id="KCTAFQE"/>
<dbReference type="OrthoDB" id="6142248at2759"/>
<dbReference type="Proteomes" id="UP000008524">
    <property type="component" value="Chromosome 1"/>
</dbReference>
<dbReference type="GO" id="GO:0020023">
    <property type="term" value="C:kinetoplast"/>
    <property type="evidence" value="ECO:0000314"/>
    <property type="project" value="GeneDB"/>
</dbReference>
<dbReference type="GO" id="GO:0031019">
    <property type="term" value="C:mitochondrial mRNA editing complex"/>
    <property type="evidence" value="ECO:0000314"/>
    <property type="project" value="GeneDB"/>
</dbReference>
<dbReference type="GO" id="GO:0005739">
    <property type="term" value="C:mitochondrion"/>
    <property type="evidence" value="ECO:0000314"/>
    <property type="project" value="GeneDB"/>
</dbReference>
<dbReference type="GO" id="GO:0045293">
    <property type="term" value="C:mRNA editing complex"/>
    <property type="evidence" value="ECO:0000314"/>
    <property type="project" value="GeneDB"/>
</dbReference>
<dbReference type="GO" id="GO:0005524">
    <property type="term" value="F:ATP binding"/>
    <property type="evidence" value="ECO:0007669"/>
    <property type="project" value="UniProtKB-KW"/>
</dbReference>
<dbReference type="GO" id="GO:0003723">
    <property type="term" value="F:RNA binding"/>
    <property type="evidence" value="ECO:0007669"/>
    <property type="project" value="UniProtKB-KW"/>
</dbReference>
<dbReference type="GO" id="GO:0003972">
    <property type="term" value="F:RNA ligase (ATP) activity"/>
    <property type="evidence" value="ECO:0000304"/>
    <property type="project" value="GeneDB"/>
</dbReference>
<dbReference type="GO" id="GO:0016556">
    <property type="term" value="P:mRNA modification"/>
    <property type="evidence" value="ECO:0000304"/>
    <property type="project" value="GeneDB"/>
</dbReference>
<dbReference type="FunFam" id="3.30.470.30:FF:000019">
    <property type="entry name" value="Mitochondrial RNA ligase 1"/>
    <property type="match status" value="1"/>
</dbReference>
<dbReference type="Gene3D" id="3.30.1490.70">
    <property type="match status" value="1"/>
</dbReference>
<dbReference type="Gene3D" id="3.30.470.30">
    <property type="entry name" value="DNA ligase/mRNA capping enzyme"/>
    <property type="match status" value="1"/>
</dbReference>
<dbReference type="Gene3D" id="1.10.10.1810">
    <property type="entry name" value="RNA ligase"/>
    <property type="match status" value="1"/>
</dbReference>
<dbReference type="InterPro" id="IPR012647">
    <property type="entry name" value="RNA_lig_RNL2"/>
</dbReference>
<dbReference type="InterPro" id="IPR021122">
    <property type="entry name" value="RNA_ligase_dom_REL/Rnl2"/>
</dbReference>
<dbReference type="InterPro" id="IPR041948">
    <property type="entry name" value="Rnl1/2_C_sf"/>
</dbReference>
<dbReference type="InterPro" id="IPR040609">
    <property type="entry name" value="Rnl2_C"/>
</dbReference>
<dbReference type="NCBIfam" id="TIGR02307">
    <property type="entry name" value="RNA_lig_RNL2"/>
    <property type="match status" value="1"/>
</dbReference>
<dbReference type="Pfam" id="PF09414">
    <property type="entry name" value="RNA_ligase"/>
    <property type="match status" value="1"/>
</dbReference>
<dbReference type="Pfam" id="PF18043">
    <property type="entry name" value="T4_Rnl2_C"/>
    <property type="match status" value="1"/>
</dbReference>
<dbReference type="SUPFAM" id="SSF56091">
    <property type="entry name" value="DNA ligase/mRNA capping enzyme, catalytic domain"/>
    <property type="match status" value="1"/>
</dbReference>
<comment type="function">
    <text evidence="2">RNA editing in kinetoplastid mitochondria inserts and deletes uridylates at multiple sites in pre-mRNAs as directed by guide RNAs.</text>
</comment>
<comment type="catalytic activity">
    <reaction evidence="3">
        <text>ATP + (ribonucleotide)n-3'-hydroxyl + 5'-phospho-(ribonucleotide)m = (ribonucleotide)n+m + AMP + diphosphate.</text>
        <dbReference type="EC" id="6.5.1.3"/>
    </reaction>
</comment>
<comment type="subunit">
    <text>Component of the RNA editing complex, a 1600 kDa complex composed of at least 20 proteins.</text>
</comment>
<comment type="subcellular location">
    <subcellularLocation>
        <location evidence="1">Mitochondrion</location>
    </subcellularLocation>
</comment>
<comment type="similarity">
    <text evidence="4">Belongs to the RNA ligase 2 family.</text>
</comment>
<accession>P86925</accession>
<accession>P82864</accession>
<accession>Q4GYS0</accession>
<reference key="1">
    <citation type="journal article" date="2003" name="Nucleic Acids Res.">
        <title>The DNA sequence of chromosome I of an African trypanosome: gene content, chromosome organisation, recombination and polymorphism.</title>
        <authorList>
            <person name="Hall N."/>
            <person name="Berriman M."/>
            <person name="Lennard N.J."/>
            <person name="Harris B.R."/>
            <person name="Hertz-Fowler C."/>
            <person name="Bart-Delabesse E.N."/>
            <person name="Gerrard C.S."/>
            <person name="Atkin R.J."/>
            <person name="Barron A.J."/>
            <person name="Bowman S."/>
            <person name="Bray-Allen S.P."/>
            <person name="Bringaud F."/>
            <person name="Clark L.N."/>
            <person name="Corton C.H."/>
            <person name="Cronin A."/>
            <person name="Davies R."/>
            <person name="Doggett J."/>
            <person name="Fraser A."/>
            <person name="Grueter E."/>
            <person name="Hall S."/>
            <person name="Harper A.D."/>
            <person name="Kay M.P."/>
            <person name="Leech V."/>
            <person name="Mayes R."/>
            <person name="Price C."/>
            <person name="Quail M.A."/>
            <person name="Rabbinowitsch E."/>
            <person name="Reitter C."/>
            <person name="Rutherford K."/>
            <person name="Sasse J."/>
            <person name="Sharp S."/>
            <person name="Shownkeen R."/>
            <person name="MacLeod A."/>
            <person name="Taylor S."/>
            <person name="Tweedie A."/>
            <person name="Turner C.M."/>
            <person name="Tait A."/>
            <person name="Gull K."/>
            <person name="Barrell B."/>
            <person name="Melville S.E."/>
        </authorList>
    </citation>
    <scope>NUCLEOTIDE SEQUENCE [LARGE SCALE GENOMIC DNA]</scope>
    <source>
        <strain evidence="5">927/4 GUTat10.1</strain>
    </source>
</reference>
<reference key="2">
    <citation type="journal article" date="2005" name="Science">
        <title>The genome of the African trypanosome Trypanosoma brucei.</title>
        <authorList>
            <person name="Berriman M."/>
            <person name="Ghedin E."/>
            <person name="Hertz-Fowler C."/>
            <person name="Blandin G."/>
            <person name="Renauld H."/>
            <person name="Bartholomeu D.C."/>
            <person name="Lennard N.J."/>
            <person name="Caler E."/>
            <person name="Hamlin N.E."/>
            <person name="Haas B."/>
            <person name="Bohme U."/>
            <person name="Hannick L."/>
            <person name="Aslett M.A."/>
            <person name="Shallom J."/>
            <person name="Marcello L."/>
            <person name="Hou L."/>
            <person name="Wickstead B."/>
            <person name="Alsmark U.C.M."/>
            <person name="Arrowsmith C."/>
            <person name="Atkin R.J."/>
            <person name="Barron A.J."/>
            <person name="Bringaud F."/>
            <person name="Brooks K."/>
            <person name="Carrington M."/>
            <person name="Cherevach I."/>
            <person name="Chillingworth T.J."/>
            <person name="Churcher C."/>
            <person name="Clark L.N."/>
            <person name="Corton C.H."/>
            <person name="Cronin A."/>
            <person name="Davies R.M."/>
            <person name="Doggett J."/>
            <person name="Djikeng A."/>
            <person name="Feldblyum T."/>
            <person name="Field M.C."/>
            <person name="Fraser A."/>
            <person name="Goodhead I."/>
            <person name="Hance Z."/>
            <person name="Harper D."/>
            <person name="Harris B.R."/>
            <person name="Hauser H."/>
            <person name="Hostetler J."/>
            <person name="Ivens A."/>
            <person name="Jagels K."/>
            <person name="Johnson D."/>
            <person name="Johnson J."/>
            <person name="Jones K."/>
            <person name="Kerhornou A.X."/>
            <person name="Koo H."/>
            <person name="Larke N."/>
            <person name="Landfear S."/>
            <person name="Larkin C."/>
            <person name="Leech V."/>
            <person name="Line A."/>
            <person name="Lord A."/>
            <person name="Macleod A."/>
            <person name="Mooney P.J."/>
            <person name="Moule S."/>
            <person name="Martin D.M."/>
            <person name="Morgan G.W."/>
            <person name="Mungall K."/>
            <person name="Norbertczak H."/>
            <person name="Ormond D."/>
            <person name="Pai G."/>
            <person name="Peacock C.S."/>
            <person name="Peterson J."/>
            <person name="Quail M.A."/>
            <person name="Rabbinowitsch E."/>
            <person name="Rajandream M.A."/>
            <person name="Reitter C."/>
            <person name="Salzberg S.L."/>
            <person name="Sanders M."/>
            <person name="Schobel S."/>
            <person name="Sharp S."/>
            <person name="Simmonds M."/>
            <person name="Simpson A.J."/>
            <person name="Tallon L."/>
            <person name="Turner C.M."/>
            <person name="Tait A."/>
            <person name="Tivey A.R."/>
            <person name="Van Aken S."/>
            <person name="Walker D."/>
            <person name="Wanless D."/>
            <person name="Wang S."/>
            <person name="White B."/>
            <person name="White O."/>
            <person name="Whitehead S."/>
            <person name="Woodward J."/>
            <person name="Wortman J."/>
            <person name="Adams M.D."/>
            <person name="Embley T.M."/>
            <person name="Gull K."/>
            <person name="Ullu E."/>
            <person name="Barry J.D."/>
            <person name="Fairlamb A.H."/>
            <person name="Opperdoes F."/>
            <person name="Barrell B.G."/>
            <person name="Donelson J.E."/>
            <person name="Hall N."/>
            <person name="Fraser C.M."/>
            <person name="Melville S.E."/>
            <person name="El-Sayed N.M.A."/>
        </authorList>
    </citation>
    <scope>NUCLEOTIDE SEQUENCE [LARGE SCALE GENOMIC DNA]</scope>
    <source>
        <strain>927/4 GUTat10.1</strain>
    </source>
</reference>
<proteinExistence type="inferred from homology"/>
<keyword id="KW-0067">ATP-binding</keyword>
<keyword id="KW-0436">Ligase</keyword>
<keyword id="KW-0496">Mitochondrion</keyword>
<keyword id="KW-0547">Nucleotide-binding</keyword>
<keyword id="KW-1185">Reference proteome</keyword>
<keyword id="KW-0694">RNA-binding</keyword>
<keyword id="KW-0809">Transit peptide</keyword>
<protein>
    <recommendedName>
        <fullName>RNA-editing ligase 2, mitochondrial</fullName>
        <shortName>RNA ligase 2</shortName>
        <ecNumber evidence="3">6.5.1.3</ecNumber>
    </recommendedName>
    <alternativeName>
        <fullName>TbMP48</fullName>
    </alternativeName>
</protein>
<name>RLGM2_TRYB2</name>
<sequence>MLRRLGVRHFRRTPLLFVGGDGSIFERYTEIDNSNERRINALKGCGMFEDEWIATEKVHGANFGIYSIEGEKMIRYAKRSGIMPPNEHFFGYHILIPELQRYITSIREMLCEKQKKKLHVVLINGELFGGKYDHPSVPKTRKTVMVAGKPRTISAVQTDSFPQYSPDLHFYAFDIKYKETEDGDYTTLVYDEAIELFQRVPGLLYARAVIRGPMSKVAAFDVERFVTTIPPLVGMGNYPLTGNWAEGLVVKHSRLGMAGFDPKGPTVLKFKCTAFQEISTDRAQGPRVDEMRNVRRDSINRAGVQLPDLESIVQDPIQLEASKLLLNHVCENRLKNVLSKIGTEPFEKEEMTPDQLATLLAKDVLKDFLKDTEPSIVNIPVLIRKDLTRYVIFESRRLVCSQWKDILKRQSPDFSE</sequence>
<gene>
    <name type="primary">REL2</name>
    <name type="ORF">Tb927.1.3030</name>
</gene>